<accession>P64734</accession>
<accession>A0A1R3XWQ1</accession>
<accession>Q10539</accession>
<accession>X2BGF3</accession>
<sequence length="262" mass="27469">MTGPTEESAVATVADWPEGLAAVLRGAADQARAAVVEFSGPEAVGDYLGVSYEDGNAATHRFIAHLPGYQGWQWAVVVASYSGADHATISEVVLVPGPTALLAPDWVPWEQRVRPGDLSPGDLLAPAKDDPRLVPGYTASGDAQVDETAAEIGLGRRWVMSAWGRAQSAQRWHDGDYGPGSAMARSTKRVCRDCGFFLPLAGSLGAMFGVCGNELSADGHVVDRQYGCGAHSDTTAPAGGSTPIYEPYDDGVLDIIEKPAES</sequence>
<dbReference type="EMBL" id="LT708304">
    <property type="protein sequence ID" value="SIT99499.1"/>
    <property type="molecule type" value="Genomic_DNA"/>
</dbReference>
<dbReference type="RefSeq" id="NP_854558.1">
    <property type="nucleotide sequence ID" value="NC_002945.3"/>
</dbReference>
<dbReference type="RefSeq" id="WP_003404596.1">
    <property type="nucleotide sequence ID" value="NC_002945.4"/>
</dbReference>
<dbReference type="KEGG" id="mbo:BQ2027_MB0901"/>
<dbReference type="PATRIC" id="fig|233413.5.peg.980"/>
<dbReference type="Proteomes" id="UP000001419">
    <property type="component" value="Chromosome"/>
</dbReference>
<dbReference type="InterPro" id="IPR021391">
    <property type="entry name" value="DUF3027"/>
</dbReference>
<dbReference type="Pfam" id="PF11228">
    <property type="entry name" value="DUF3027"/>
    <property type="match status" value="1"/>
</dbReference>
<proteinExistence type="predicted"/>
<protein>
    <recommendedName>
        <fullName>Uncharacterized protein Mb0901</fullName>
    </recommendedName>
</protein>
<gene>
    <name type="ordered locus">BQ2027_MB0901</name>
</gene>
<reference key="1">
    <citation type="journal article" date="2003" name="Proc. Natl. Acad. Sci. U.S.A.">
        <title>The complete genome sequence of Mycobacterium bovis.</title>
        <authorList>
            <person name="Garnier T."/>
            <person name="Eiglmeier K."/>
            <person name="Camus J.-C."/>
            <person name="Medina N."/>
            <person name="Mansoor H."/>
            <person name="Pryor M."/>
            <person name="Duthoy S."/>
            <person name="Grondin S."/>
            <person name="Lacroix C."/>
            <person name="Monsempe C."/>
            <person name="Simon S."/>
            <person name="Harris B."/>
            <person name="Atkin R."/>
            <person name="Doggett J."/>
            <person name="Mayes R."/>
            <person name="Keating L."/>
            <person name="Wheeler P.R."/>
            <person name="Parkhill J."/>
            <person name="Barrell B.G."/>
            <person name="Cole S.T."/>
            <person name="Gordon S.V."/>
            <person name="Hewinson R.G."/>
        </authorList>
    </citation>
    <scope>NUCLEOTIDE SEQUENCE [LARGE SCALE GENOMIC DNA]</scope>
    <source>
        <strain>ATCC BAA-935 / AF2122/97</strain>
    </source>
</reference>
<reference key="2">
    <citation type="journal article" date="2017" name="Genome Announc.">
        <title>Updated reference genome sequence and annotation of Mycobacterium bovis AF2122/97.</title>
        <authorList>
            <person name="Malone K.M."/>
            <person name="Farrell D."/>
            <person name="Stuber T.P."/>
            <person name="Schubert O.T."/>
            <person name="Aebersold R."/>
            <person name="Robbe-Austerman S."/>
            <person name="Gordon S.V."/>
        </authorList>
    </citation>
    <scope>NUCLEOTIDE SEQUENCE [LARGE SCALE GENOMIC DNA]</scope>
    <scope>GENOME REANNOTATION</scope>
    <source>
        <strain>ATCC BAA-935 / AF2122/97</strain>
    </source>
</reference>
<organism>
    <name type="scientific">Mycobacterium bovis (strain ATCC BAA-935 / AF2122/97)</name>
    <dbReference type="NCBI Taxonomy" id="233413"/>
    <lineage>
        <taxon>Bacteria</taxon>
        <taxon>Bacillati</taxon>
        <taxon>Actinomycetota</taxon>
        <taxon>Actinomycetes</taxon>
        <taxon>Mycobacteriales</taxon>
        <taxon>Mycobacteriaceae</taxon>
        <taxon>Mycobacterium</taxon>
        <taxon>Mycobacterium tuberculosis complex</taxon>
    </lineage>
</organism>
<name>Y901_MYCBO</name>
<keyword id="KW-1185">Reference proteome</keyword>
<feature type="chain" id="PRO_0000103722" description="Uncharacterized protein Mb0901">
    <location>
        <begin position="1"/>
        <end position="262"/>
    </location>
</feature>